<sequence length="246" mass="27139">MSHESIEKNLNFVKKLNNVNDSVLKIENLALAYDNKKVLDGINISIEKGDIVTILGPNGGGKTSLMKVVAGISKNYTGSVIFADNIKISYMPQNFSISKLMPITVEYFLLNSFSKKLKKNQSVITEVIELVGIGSILKNQVLEISAGQMQLLLLAHCLIAEPDLIILDEPVSAMDINARAKFYDIIGEIAKKRLISILMTSHDLSSIVPCSDYIICINHTIYCQGKPGKIMEDRTLGEIFSSYIAK</sequence>
<reference key="1">
    <citation type="journal article" date="2005" name="PLoS Biol.">
        <title>The Wolbachia genome of Brugia malayi: endosymbiont evolution within a human pathogenic nematode.</title>
        <authorList>
            <person name="Foster J."/>
            <person name="Ganatra M."/>
            <person name="Kamal I."/>
            <person name="Ware J."/>
            <person name="Makarova K."/>
            <person name="Ivanova N."/>
            <person name="Bhattacharyya A."/>
            <person name="Kapatral V."/>
            <person name="Kumar S."/>
            <person name="Posfai J."/>
            <person name="Vincze T."/>
            <person name="Ingram J."/>
            <person name="Moran L."/>
            <person name="Lapidus A."/>
            <person name="Omelchenko M."/>
            <person name="Kyrpides N."/>
            <person name="Ghedin E."/>
            <person name="Wang S."/>
            <person name="Goltsman E."/>
            <person name="Joukov V."/>
            <person name="Ostrovskaya O."/>
            <person name="Tsukerman K."/>
            <person name="Mazur M."/>
            <person name="Comb D."/>
            <person name="Koonin E."/>
            <person name="Slatko B."/>
        </authorList>
    </citation>
    <scope>NUCLEOTIDE SEQUENCE [LARGE SCALE GENOMIC DNA]</scope>
    <source>
        <strain>TRS</strain>
    </source>
</reference>
<evidence type="ECO:0000255" key="1">
    <source>
        <dbReference type="HAMAP-Rule" id="MF_01725"/>
    </source>
</evidence>
<proteinExistence type="inferred from homology"/>
<dbReference type="EC" id="7.2.2.20" evidence="1"/>
<dbReference type="EMBL" id="AE017321">
    <property type="protein sequence ID" value="AAW71303.1"/>
    <property type="molecule type" value="Genomic_DNA"/>
</dbReference>
<dbReference type="RefSeq" id="WP_011256912.1">
    <property type="nucleotide sequence ID" value="NC_006833.1"/>
</dbReference>
<dbReference type="SMR" id="Q5GRS1"/>
<dbReference type="STRING" id="292805.Wbm0715"/>
<dbReference type="KEGG" id="wbm:Wbm0715"/>
<dbReference type="eggNOG" id="COG1121">
    <property type="taxonomic scope" value="Bacteria"/>
</dbReference>
<dbReference type="HOGENOM" id="CLU_000604_1_11_5"/>
<dbReference type="Proteomes" id="UP000000534">
    <property type="component" value="Chromosome"/>
</dbReference>
<dbReference type="GO" id="GO:0005886">
    <property type="term" value="C:plasma membrane"/>
    <property type="evidence" value="ECO:0007669"/>
    <property type="project" value="UniProtKB-SubCell"/>
</dbReference>
<dbReference type="GO" id="GO:0015633">
    <property type="term" value="F:ABC-type zinc transporter activity"/>
    <property type="evidence" value="ECO:0007669"/>
    <property type="project" value="UniProtKB-EC"/>
</dbReference>
<dbReference type="GO" id="GO:0005524">
    <property type="term" value="F:ATP binding"/>
    <property type="evidence" value="ECO:0007669"/>
    <property type="project" value="UniProtKB-KW"/>
</dbReference>
<dbReference type="GO" id="GO:0016887">
    <property type="term" value="F:ATP hydrolysis activity"/>
    <property type="evidence" value="ECO:0007669"/>
    <property type="project" value="InterPro"/>
</dbReference>
<dbReference type="Gene3D" id="3.40.50.300">
    <property type="entry name" value="P-loop containing nucleotide triphosphate hydrolases"/>
    <property type="match status" value="1"/>
</dbReference>
<dbReference type="InterPro" id="IPR003593">
    <property type="entry name" value="AAA+_ATPase"/>
</dbReference>
<dbReference type="InterPro" id="IPR003439">
    <property type="entry name" value="ABC_transporter-like_ATP-bd"/>
</dbReference>
<dbReference type="InterPro" id="IPR050153">
    <property type="entry name" value="Metal_Ion_Import_ABC"/>
</dbReference>
<dbReference type="InterPro" id="IPR027417">
    <property type="entry name" value="P-loop_NTPase"/>
</dbReference>
<dbReference type="PANTHER" id="PTHR42734">
    <property type="entry name" value="METAL TRANSPORT SYSTEM ATP-BINDING PROTEIN TM_0124-RELATED"/>
    <property type="match status" value="1"/>
</dbReference>
<dbReference type="PANTHER" id="PTHR42734:SF17">
    <property type="entry name" value="METAL TRANSPORT SYSTEM ATP-BINDING PROTEIN TM_0124-RELATED"/>
    <property type="match status" value="1"/>
</dbReference>
<dbReference type="Pfam" id="PF00005">
    <property type="entry name" value="ABC_tran"/>
    <property type="match status" value="1"/>
</dbReference>
<dbReference type="SMART" id="SM00382">
    <property type="entry name" value="AAA"/>
    <property type="match status" value="1"/>
</dbReference>
<dbReference type="SUPFAM" id="SSF52540">
    <property type="entry name" value="P-loop containing nucleoside triphosphate hydrolases"/>
    <property type="match status" value="1"/>
</dbReference>
<dbReference type="PROSITE" id="PS50893">
    <property type="entry name" value="ABC_TRANSPORTER_2"/>
    <property type="match status" value="1"/>
</dbReference>
<dbReference type="PROSITE" id="PS51298">
    <property type="entry name" value="ZNUC"/>
    <property type="match status" value="1"/>
</dbReference>
<comment type="function">
    <text evidence="1">Part of the ABC transporter complex ZnuABC involved in zinc import. Responsible for energy coupling to the transport system.</text>
</comment>
<comment type="catalytic activity">
    <reaction evidence="1">
        <text>Zn(2+)(out) + ATP(in) + H2O(in) = Zn(2+)(in) + ADP(in) + phosphate(in) + H(+)(in)</text>
        <dbReference type="Rhea" id="RHEA:29795"/>
        <dbReference type="ChEBI" id="CHEBI:15377"/>
        <dbReference type="ChEBI" id="CHEBI:15378"/>
        <dbReference type="ChEBI" id="CHEBI:29105"/>
        <dbReference type="ChEBI" id="CHEBI:30616"/>
        <dbReference type="ChEBI" id="CHEBI:43474"/>
        <dbReference type="ChEBI" id="CHEBI:456216"/>
        <dbReference type="EC" id="7.2.2.20"/>
    </reaction>
</comment>
<comment type="subunit">
    <text evidence="1">The complex is composed of two ATP-binding proteins (ZnuC), two transmembrane proteins (ZnuB) and a solute-binding protein (ZnuA).</text>
</comment>
<comment type="subcellular location">
    <subcellularLocation>
        <location evidence="1">Cell membrane</location>
        <topology evidence="1">Peripheral membrane protein</topology>
    </subcellularLocation>
</comment>
<comment type="similarity">
    <text evidence="1">Belongs to the ABC transporter superfamily. Zinc importer (TC 3.A.1.15.5) family.</text>
</comment>
<protein>
    <recommendedName>
        <fullName evidence="1">Zinc import ATP-binding protein ZnuC</fullName>
        <ecNumber evidence="1">7.2.2.20</ecNumber>
    </recommendedName>
</protein>
<keyword id="KW-0067">ATP-binding</keyword>
<keyword id="KW-1003">Cell membrane</keyword>
<keyword id="KW-0406">Ion transport</keyword>
<keyword id="KW-0472">Membrane</keyword>
<keyword id="KW-0547">Nucleotide-binding</keyword>
<keyword id="KW-1185">Reference proteome</keyword>
<keyword id="KW-1278">Translocase</keyword>
<keyword id="KW-0813">Transport</keyword>
<keyword id="KW-0862">Zinc</keyword>
<keyword id="KW-0864">Zinc transport</keyword>
<name>ZNUC_WOLTR</name>
<accession>Q5GRS1</accession>
<organism>
    <name type="scientific">Wolbachia sp. subsp. Brugia malayi (strain TRS)</name>
    <dbReference type="NCBI Taxonomy" id="292805"/>
    <lineage>
        <taxon>Bacteria</taxon>
        <taxon>Pseudomonadati</taxon>
        <taxon>Pseudomonadota</taxon>
        <taxon>Alphaproteobacteria</taxon>
        <taxon>Rickettsiales</taxon>
        <taxon>Anaplasmataceae</taxon>
        <taxon>Wolbachieae</taxon>
        <taxon>Wolbachia</taxon>
    </lineage>
</organism>
<gene>
    <name evidence="1" type="primary">znuC</name>
    <name type="ordered locus">Wbm0715</name>
</gene>
<feature type="chain" id="PRO_0000281567" description="Zinc import ATP-binding protein ZnuC">
    <location>
        <begin position="1"/>
        <end position="246"/>
    </location>
</feature>
<feature type="domain" description="ABC transporter" evidence="1">
    <location>
        <begin position="24"/>
        <end position="244"/>
    </location>
</feature>
<feature type="binding site" evidence="1">
    <location>
        <begin position="56"/>
        <end position="63"/>
    </location>
    <ligand>
        <name>ATP</name>
        <dbReference type="ChEBI" id="CHEBI:30616"/>
    </ligand>
</feature>